<protein>
    <recommendedName>
        <fullName>Uncharacterized protein YfcL</fullName>
    </recommendedName>
</protein>
<name>YFCL_ECOLI</name>
<sequence length="92" mass="10000">MIAEFESRILALIDGMVDHASDDELFASGYLRGHLTLAIAELESGDDHSAQAVHTTVSQSLEKAIGAGELSPRDQALVTDMWENLFQQASQQ</sequence>
<dbReference type="EMBL" id="U00096">
    <property type="protein sequence ID" value="AAC75385.1"/>
    <property type="molecule type" value="Genomic_DNA"/>
</dbReference>
<dbReference type="EMBL" id="AP009048">
    <property type="protein sequence ID" value="BAE76688.1"/>
    <property type="molecule type" value="Genomic_DNA"/>
</dbReference>
<dbReference type="PIR" id="C65005">
    <property type="entry name" value="C65005"/>
</dbReference>
<dbReference type="RefSeq" id="NP_416828.1">
    <property type="nucleotide sequence ID" value="NC_000913.3"/>
</dbReference>
<dbReference type="RefSeq" id="WP_000559764.1">
    <property type="nucleotide sequence ID" value="NZ_SSZK01000006.1"/>
</dbReference>
<dbReference type="BioGRID" id="4261954">
    <property type="interactions" value="16"/>
</dbReference>
<dbReference type="BioGRID" id="851145">
    <property type="interactions" value="3"/>
</dbReference>
<dbReference type="DIP" id="DIP-48102N"/>
<dbReference type="FunCoup" id="P64540">
    <property type="interactions" value="83"/>
</dbReference>
<dbReference type="IntAct" id="P64540">
    <property type="interactions" value="9"/>
</dbReference>
<dbReference type="STRING" id="511145.b2325"/>
<dbReference type="jPOST" id="P64540"/>
<dbReference type="PaxDb" id="511145-b2325"/>
<dbReference type="EnsemblBacteria" id="AAC75385">
    <property type="protein sequence ID" value="AAC75385"/>
    <property type="gene ID" value="b2325"/>
</dbReference>
<dbReference type="GeneID" id="946804"/>
<dbReference type="KEGG" id="ecj:JW2322"/>
<dbReference type="KEGG" id="eco:b2325"/>
<dbReference type="KEGG" id="ecoc:C3026_12955"/>
<dbReference type="PATRIC" id="fig|511145.12.peg.2421"/>
<dbReference type="EchoBASE" id="EB3868"/>
<dbReference type="eggNOG" id="ENOG5032SAV">
    <property type="taxonomic scope" value="Bacteria"/>
</dbReference>
<dbReference type="HOGENOM" id="CLU_183014_0_0_6"/>
<dbReference type="InParanoid" id="P64540"/>
<dbReference type="OMA" id="GMWENLY"/>
<dbReference type="OrthoDB" id="5600394at2"/>
<dbReference type="PhylomeDB" id="P64540"/>
<dbReference type="BioCyc" id="EcoCyc:G7200-MONOMER"/>
<dbReference type="PRO" id="PR:P64540"/>
<dbReference type="Proteomes" id="UP000000625">
    <property type="component" value="Chromosome"/>
</dbReference>
<dbReference type="GO" id="GO:0005829">
    <property type="term" value="C:cytosol"/>
    <property type="evidence" value="ECO:0000314"/>
    <property type="project" value="EcoCyc"/>
</dbReference>
<dbReference type="InterPro" id="IPR014987">
    <property type="entry name" value="UPF_YfcL"/>
</dbReference>
<dbReference type="Pfam" id="PF08891">
    <property type="entry name" value="YfcL"/>
    <property type="match status" value="1"/>
</dbReference>
<proteinExistence type="predicted"/>
<gene>
    <name type="primary">yfcL</name>
    <name type="ordered locus">b2325</name>
    <name type="ordered locus">JW2322</name>
</gene>
<reference key="1">
    <citation type="journal article" date="1997" name="Science">
        <title>The complete genome sequence of Escherichia coli K-12.</title>
        <authorList>
            <person name="Blattner F.R."/>
            <person name="Plunkett G. III"/>
            <person name="Bloch C.A."/>
            <person name="Perna N.T."/>
            <person name="Burland V."/>
            <person name="Riley M."/>
            <person name="Collado-Vides J."/>
            <person name="Glasner J.D."/>
            <person name="Rode C.K."/>
            <person name="Mayhew G.F."/>
            <person name="Gregor J."/>
            <person name="Davis N.W."/>
            <person name="Kirkpatrick H.A."/>
            <person name="Goeden M.A."/>
            <person name="Rose D.J."/>
            <person name="Mau B."/>
            <person name="Shao Y."/>
        </authorList>
    </citation>
    <scope>NUCLEOTIDE SEQUENCE [LARGE SCALE GENOMIC DNA]</scope>
    <source>
        <strain>K12 / MG1655 / ATCC 47076</strain>
    </source>
</reference>
<reference key="2">
    <citation type="journal article" date="2006" name="Mol. Syst. Biol.">
        <title>Highly accurate genome sequences of Escherichia coli K-12 strains MG1655 and W3110.</title>
        <authorList>
            <person name="Hayashi K."/>
            <person name="Morooka N."/>
            <person name="Yamamoto Y."/>
            <person name="Fujita K."/>
            <person name="Isono K."/>
            <person name="Choi S."/>
            <person name="Ohtsubo E."/>
            <person name="Baba T."/>
            <person name="Wanner B.L."/>
            <person name="Mori H."/>
            <person name="Horiuchi T."/>
        </authorList>
    </citation>
    <scope>NUCLEOTIDE SEQUENCE [LARGE SCALE GENOMIC DNA]</scope>
    <source>
        <strain>K12 / W3110 / ATCC 27325 / DSM 5911</strain>
    </source>
</reference>
<keyword id="KW-1185">Reference proteome</keyword>
<organism>
    <name type="scientific">Escherichia coli (strain K12)</name>
    <dbReference type="NCBI Taxonomy" id="83333"/>
    <lineage>
        <taxon>Bacteria</taxon>
        <taxon>Pseudomonadati</taxon>
        <taxon>Pseudomonadota</taxon>
        <taxon>Gammaproteobacteria</taxon>
        <taxon>Enterobacterales</taxon>
        <taxon>Enterobacteriaceae</taxon>
        <taxon>Escherichia</taxon>
    </lineage>
</organism>
<feature type="chain" id="PRO_0000169194" description="Uncharacterized protein YfcL">
    <location>
        <begin position="1"/>
        <end position="92"/>
    </location>
</feature>
<accession>P64540</accession>
<accession>P76496</accession>
<accession>Q2MAL8</accession>